<comment type="function">
    <text evidence="1">E1 component of the 2-oxoglutarate dehydrogenase (OGDH) complex which catalyzes the decarboxylation of 2-oxoglutarate, the first step in the conversion of 2-oxoglutarate to succinyl-CoA and CO(2).</text>
</comment>
<comment type="catalytic activity">
    <reaction evidence="1">
        <text>N(6)-[(R)-lipoyl]-L-lysyl-[protein] + 2-oxoglutarate + H(+) = N(6)-[(R)-S(8)-succinyldihydrolipoyl]-L-lysyl-[protein] + CO2</text>
        <dbReference type="Rhea" id="RHEA:12188"/>
        <dbReference type="Rhea" id="RHEA-COMP:10474"/>
        <dbReference type="Rhea" id="RHEA-COMP:20092"/>
        <dbReference type="ChEBI" id="CHEBI:15378"/>
        <dbReference type="ChEBI" id="CHEBI:16526"/>
        <dbReference type="ChEBI" id="CHEBI:16810"/>
        <dbReference type="ChEBI" id="CHEBI:83099"/>
        <dbReference type="ChEBI" id="CHEBI:83120"/>
        <dbReference type="EC" id="1.2.4.2"/>
    </reaction>
</comment>
<comment type="cofactor">
    <cofactor evidence="1">
        <name>thiamine diphosphate</name>
        <dbReference type="ChEBI" id="CHEBI:58937"/>
    </cofactor>
</comment>
<comment type="subunit">
    <text evidence="1">Homodimer. Part of the 2-oxoglutarate dehydrogenase (OGDH) complex composed of E1 (2-oxoglutarate dehydrogenase), E2 (dihydrolipoamide succinyltransferase) and E3 (dihydrolipoamide dehydrogenase); the complex contains multiple copies of the three enzymatic components (E1, E2 and E3).</text>
</comment>
<comment type="similarity">
    <text evidence="1">Belongs to the alpha-ketoglutarate dehydrogenase family.</text>
</comment>
<sequence length="951" mass="106924">MGESSNVHEKSQAFYGPNLGYIIELYEQYLEDPSSVDEETRRYFDEFGAPETSTPTEVPVSGPSFDLEKVVSATRLINDIRAFGHKAADIYPLKDHPREQELFELSRYDLTEEDLKQIPARLLSDDAPKPNASALELFRHLLDVYTGTVAIELRHLDDMEEKKWIRRQVEQGALQQTFSKEEKIELFKRLAETELFESFLHKTYVGQKRFSIEGLDAMVPLLDAMVGGLISSGSEHINIGMAHRGRLNVLAHVLGKPYEMIFAEFQHAPNKELIPSEGSIGINFGWSGDVKYHLGLDRKVVEQQKEVRLNLANNPSHLEFVGSVVEGYTRAAQDDRSEKGSAVQHDDLAASILIHGDAAFPGQGIVAETLNMTNLTGYRTGGTVHVIANNTIGFTTDPNDSRSTRYASDIAKGYEIPVFHVNADDPEACVAVAKLISEYRAKFHKDILVDLIGYRRYGHNEMDEPMNTNPVLYKAIKGHQSVRHVYAARLEEEGVMTKDEKAQIEQKIEEALKAARDLVPSEEEDADIVLPDAVHKGFPKVDTSVEREFLTQLNEELLNWPEGFGVFHKLQKVLDRRRDAFSEGGKIDWGHAETLAFASILSDGTPVRLSGQDSERGTFAQRNIMLNDVESGKKFSPLHELSTAKASFSVYNSPLSEGSVLGFEYGYNVFAQDTLVLWEAQYGDFANSAQVMFDQFISAGRAKWGQKSGLVMLLPHGYEGQGPEHSSARMERYLTLAGEKNWTVANLSSAAQYFHILRRQAEMLGKEEIRPMIIMTPKSLLRHPLATSPVEAFTEESFKPIVEQPGLGENTEKVERLVFCTGKMAIDLAEAVGKSEESLDFLHIVRVEEIYPFPVREIRDVISRYPNAREIVWVQEEPKNMGAWTYIEPRLEAVTTNRLDVRYIGRRRRSSPAEGNPTAHKQEQARIIREALSRDVVSSGAGTSTYQKDRK</sequence>
<evidence type="ECO:0000255" key="1">
    <source>
        <dbReference type="HAMAP-Rule" id="MF_01169"/>
    </source>
</evidence>
<evidence type="ECO:0000256" key="2">
    <source>
        <dbReference type="SAM" id="MobiDB-lite"/>
    </source>
</evidence>
<keyword id="KW-0324">Glycolysis</keyword>
<keyword id="KW-0560">Oxidoreductase</keyword>
<keyword id="KW-0786">Thiamine pyrophosphate</keyword>
<gene>
    <name evidence="1" type="primary">odhA</name>
    <name type="ordered locus">EAT1b_2538</name>
</gene>
<accession>C4L3W2</accession>
<proteinExistence type="inferred from homology"/>
<name>ODO1_EXISA</name>
<protein>
    <recommendedName>
        <fullName evidence="1">2-oxoglutarate dehydrogenase E1 component</fullName>
        <ecNumber evidence="1">1.2.4.2</ecNumber>
    </recommendedName>
    <alternativeName>
        <fullName evidence="1">Alpha-ketoglutarate dehydrogenase</fullName>
    </alternativeName>
</protein>
<organism>
    <name type="scientific">Exiguobacterium sp. (strain ATCC BAA-1283 / AT1b)</name>
    <dbReference type="NCBI Taxonomy" id="360911"/>
    <lineage>
        <taxon>Bacteria</taxon>
        <taxon>Bacillati</taxon>
        <taxon>Bacillota</taxon>
        <taxon>Bacilli</taxon>
        <taxon>Bacillales</taxon>
        <taxon>Bacillales Family XII. Incertae Sedis</taxon>
        <taxon>Exiguobacterium</taxon>
    </lineage>
</organism>
<reference key="1">
    <citation type="journal article" date="2011" name="J. Bacteriol.">
        <title>Complete genome sequence of the Thermophilic Bacterium Exiguobacterium sp. AT1b.</title>
        <authorList>
            <person name="Vishnivetskaya T.A."/>
            <person name="Lucas S."/>
            <person name="Copeland A."/>
            <person name="Lapidus A."/>
            <person name="Glavina del Rio T."/>
            <person name="Dalin E."/>
            <person name="Tice H."/>
            <person name="Bruce D.C."/>
            <person name="Goodwin L.A."/>
            <person name="Pitluck S."/>
            <person name="Saunders E."/>
            <person name="Brettin T."/>
            <person name="Detter C."/>
            <person name="Han C."/>
            <person name="Larimer F."/>
            <person name="Land M.L."/>
            <person name="Hauser L.J."/>
            <person name="Kyrpides N.C."/>
            <person name="Ovchinnikova G."/>
            <person name="Kathariou S."/>
            <person name="Ramaley R.F."/>
            <person name="Rodrigues D.F."/>
            <person name="Hendrix C."/>
            <person name="Richardson P."/>
            <person name="Tiedje J.M."/>
        </authorList>
    </citation>
    <scope>NUCLEOTIDE SEQUENCE [LARGE SCALE GENOMIC DNA]</scope>
    <source>
        <strain>ATCC BAA-1283 / AT1b</strain>
    </source>
</reference>
<dbReference type="EC" id="1.2.4.2" evidence="1"/>
<dbReference type="EMBL" id="CP001615">
    <property type="protein sequence ID" value="ACQ71457.1"/>
    <property type="molecule type" value="Genomic_DNA"/>
</dbReference>
<dbReference type="RefSeq" id="WP_015881016.1">
    <property type="nucleotide sequence ID" value="NC_012673.1"/>
</dbReference>
<dbReference type="SMR" id="C4L3W2"/>
<dbReference type="STRING" id="360911.EAT1b_2538"/>
<dbReference type="KEGG" id="eat:EAT1b_2538"/>
<dbReference type="eggNOG" id="COG0567">
    <property type="taxonomic scope" value="Bacteria"/>
</dbReference>
<dbReference type="HOGENOM" id="CLU_004709_1_0_9"/>
<dbReference type="OrthoDB" id="9759785at2"/>
<dbReference type="Proteomes" id="UP000000716">
    <property type="component" value="Chromosome"/>
</dbReference>
<dbReference type="GO" id="GO:0005829">
    <property type="term" value="C:cytosol"/>
    <property type="evidence" value="ECO:0007669"/>
    <property type="project" value="TreeGrafter"/>
</dbReference>
<dbReference type="GO" id="GO:0045252">
    <property type="term" value="C:oxoglutarate dehydrogenase complex"/>
    <property type="evidence" value="ECO:0007669"/>
    <property type="project" value="TreeGrafter"/>
</dbReference>
<dbReference type="GO" id="GO:0004591">
    <property type="term" value="F:oxoglutarate dehydrogenase (succinyl-transferring) activity"/>
    <property type="evidence" value="ECO:0007669"/>
    <property type="project" value="UniProtKB-UniRule"/>
</dbReference>
<dbReference type="GO" id="GO:0030976">
    <property type="term" value="F:thiamine pyrophosphate binding"/>
    <property type="evidence" value="ECO:0007669"/>
    <property type="project" value="UniProtKB-UniRule"/>
</dbReference>
<dbReference type="GO" id="GO:0006096">
    <property type="term" value="P:glycolytic process"/>
    <property type="evidence" value="ECO:0007669"/>
    <property type="project" value="UniProtKB-UniRule"/>
</dbReference>
<dbReference type="GO" id="GO:0006099">
    <property type="term" value="P:tricarboxylic acid cycle"/>
    <property type="evidence" value="ECO:0007669"/>
    <property type="project" value="TreeGrafter"/>
</dbReference>
<dbReference type="CDD" id="cd02016">
    <property type="entry name" value="TPP_E1_OGDC_like"/>
    <property type="match status" value="1"/>
</dbReference>
<dbReference type="FunFam" id="3.40.50.11610:FF:000002">
    <property type="entry name" value="2-oxoglutarate dehydrogenase E1 component"/>
    <property type="match status" value="1"/>
</dbReference>
<dbReference type="FunFam" id="3.40.50.970:FF:000036">
    <property type="entry name" value="2-oxoglutarate dehydrogenase E1 component"/>
    <property type="match status" value="1"/>
</dbReference>
<dbReference type="Gene3D" id="3.40.50.12470">
    <property type="match status" value="1"/>
</dbReference>
<dbReference type="Gene3D" id="3.40.50.970">
    <property type="match status" value="1"/>
</dbReference>
<dbReference type="Gene3D" id="3.40.50.11610">
    <property type="entry name" value="Multifunctional 2-oxoglutarate metabolism enzyme, C-terminal domain"/>
    <property type="match status" value="1"/>
</dbReference>
<dbReference type="Gene3D" id="1.10.287.1150">
    <property type="entry name" value="TPP helical domain"/>
    <property type="match status" value="1"/>
</dbReference>
<dbReference type="HAMAP" id="MF_01169">
    <property type="entry name" value="SucA_OdhA"/>
    <property type="match status" value="1"/>
</dbReference>
<dbReference type="InterPro" id="IPR032106">
    <property type="entry name" value="2-oxogl_dehyd_N"/>
</dbReference>
<dbReference type="InterPro" id="IPR011603">
    <property type="entry name" value="2oxoglutarate_DH_E1"/>
</dbReference>
<dbReference type="InterPro" id="IPR023784">
    <property type="entry name" value="2oxoglutarate_DH_E1_bac"/>
</dbReference>
<dbReference type="InterPro" id="IPR001017">
    <property type="entry name" value="DH_E1"/>
</dbReference>
<dbReference type="InterPro" id="IPR042179">
    <property type="entry name" value="KGD_C_sf"/>
</dbReference>
<dbReference type="InterPro" id="IPR031717">
    <property type="entry name" value="ODO-1/KGD_C"/>
</dbReference>
<dbReference type="InterPro" id="IPR029061">
    <property type="entry name" value="THDP-binding"/>
</dbReference>
<dbReference type="InterPro" id="IPR005475">
    <property type="entry name" value="Transketolase-like_Pyr-bd"/>
</dbReference>
<dbReference type="NCBIfam" id="TIGR00239">
    <property type="entry name" value="2oxo_dh_E1"/>
    <property type="match status" value="1"/>
</dbReference>
<dbReference type="NCBIfam" id="NF006914">
    <property type="entry name" value="PRK09404.1"/>
    <property type="match status" value="1"/>
</dbReference>
<dbReference type="NCBIfam" id="NF008907">
    <property type="entry name" value="PRK12270.1"/>
    <property type="match status" value="1"/>
</dbReference>
<dbReference type="PANTHER" id="PTHR23152:SF4">
    <property type="entry name" value="2-OXOADIPATE DEHYDROGENASE COMPLEX COMPONENT E1"/>
    <property type="match status" value="1"/>
</dbReference>
<dbReference type="PANTHER" id="PTHR23152">
    <property type="entry name" value="2-OXOGLUTARATE DEHYDROGENASE"/>
    <property type="match status" value="1"/>
</dbReference>
<dbReference type="Pfam" id="PF16078">
    <property type="entry name" value="2-oxogl_dehyd_N"/>
    <property type="match status" value="1"/>
</dbReference>
<dbReference type="Pfam" id="PF00676">
    <property type="entry name" value="E1_dh"/>
    <property type="match status" value="1"/>
</dbReference>
<dbReference type="Pfam" id="PF16870">
    <property type="entry name" value="OxoGdeHyase_C"/>
    <property type="match status" value="1"/>
</dbReference>
<dbReference type="Pfam" id="PF02779">
    <property type="entry name" value="Transket_pyr"/>
    <property type="match status" value="1"/>
</dbReference>
<dbReference type="PIRSF" id="PIRSF000157">
    <property type="entry name" value="Oxoglu_dh_E1"/>
    <property type="match status" value="1"/>
</dbReference>
<dbReference type="SMART" id="SM00861">
    <property type="entry name" value="Transket_pyr"/>
    <property type="match status" value="1"/>
</dbReference>
<dbReference type="SUPFAM" id="SSF52518">
    <property type="entry name" value="Thiamin diphosphate-binding fold (THDP-binding)"/>
    <property type="match status" value="2"/>
</dbReference>
<feature type="chain" id="PRO_1000213735" description="2-oxoglutarate dehydrogenase E1 component">
    <location>
        <begin position="1"/>
        <end position="951"/>
    </location>
</feature>
<feature type="region of interest" description="Disordered" evidence="2">
    <location>
        <begin position="906"/>
        <end position="925"/>
    </location>
</feature>